<comment type="function">
    <text evidence="1">Thiol-specific peroxidase that catalyzes the reduction of hydrogen peroxide and organic hydroperoxides to water and alcohols, respectively. Plays a role in cell protection against oxidative stress by detoxifying peroxides.</text>
</comment>
<comment type="catalytic activity">
    <reaction evidence="1">
        <text>a hydroperoxide + NADH + H(+) = an alcohol + NAD(+) + H2O</text>
        <dbReference type="Rhea" id="RHEA:62628"/>
        <dbReference type="ChEBI" id="CHEBI:15377"/>
        <dbReference type="ChEBI" id="CHEBI:15378"/>
        <dbReference type="ChEBI" id="CHEBI:30879"/>
        <dbReference type="ChEBI" id="CHEBI:35924"/>
        <dbReference type="ChEBI" id="CHEBI:57540"/>
        <dbReference type="ChEBI" id="CHEBI:57945"/>
        <dbReference type="EC" id="1.11.1.26"/>
    </reaction>
</comment>
<comment type="subunit">
    <text evidence="1">Homodimer; disulfide-linked, upon oxidation. 5 homodimers assemble to form a ring-like decamer.</text>
</comment>
<comment type="subcellular location">
    <subcellularLocation>
        <location evidence="2">Cytoplasm</location>
    </subcellularLocation>
</comment>
<comment type="miscellaneous">
    <text evidence="1">The active site is a conserved redox-active cysteine residue, the peroxidatic cysteine (C(P)), which makes the nucleophilic attack on the peroxide substrate. The peroxide oxidizes the C(P)-SH to cysteine sulfenic acid (C(P)-SOH), which then reacts with another cysteine residue, the resolving cysteine (C(R)), to form a disulfide bridge. The disulfide is subsequently reduced by an appropriate electron donor to complete the catalytic cycle. In this typical 2-Cys peroxiredoxin, C(R) is provided by the other dimeric subunit to form an intersubunit disulfide. The disulfide is subsequently reduced by AhpF.</text>
</comment>
<comment type="similarity">
    <text evidence="4">Belongs to the peroxiredoxin family. AhpC/Prx1 subfamily.</text>
</comment>
<evidence type="ECO:0000250" key="1">
    <source>
        <dbReference type="UniProtKB" id="P0A251"/>
    </source>
</evidence>
<evidence type="ECO:0000250" key="2">
    <source>
        <dbReference type="UniProtKB" id="P0AE08"/>
    </source>
</evidence>
<evidence type="ECO:0000255" key="3">
    <source>
        <dbReference type="PROSITE-ProRule" id="PRU00691"/>
    </source>
</evidence>
<evidence type="ECO:0000305" key="4"/>
<reference key="1">
    <citation type="journal article" date="1996" name="J. Bacteriol.">
        <title>Characterization of the region encoding the CO-induced hydrogenase of Rhodospirillum rubrum.</title>
        <authorList>
            <person name="Fox D.J."/>
            <person name="He Y."/>
            <person name="Shelver D."/>
            <person name="Roberts G.P."/>
            <person name="Ludden P.W."/>
        </authorList>
    </citation>
    <scope>NUCLEOTIDE SEQUENCE [GENOMIC DNA]</scope>
    <source>
        <strain>UR1</strain>
    </source>
</reference>
<gene>
    <name type="primary">ahpC</name>
</gene>
<accession>P72314</accession>
<name>AHPC_RHORU</name>
<dbReference type="EC" id="1.11.1.26" evidence="1"/>
<dbReference type="EMBL" id="U65510">
    <property type="protein sequence ID" value="AAC45114.1"/>
    <property type="molecule type" value="Genomic_DNA"/>
</dbReference>
<dbReference type="PIR" id="T51312">
    <property type="entry name" value="T51312"/>
</dbReference>
<dbReference type="SMR" id="P72314"/>
<dbReference type="GO" id="GO:0005829">
    <property type="term" value="C:cytosol"/>
    <property type="evidence" value="ECO:0007669"/>
    <property type="project" value="TreeGrafter"/>
</dbReference>
<dbReference type="GO" id="GO:0102039">
    <property type="term" value="F:NADH-dependent peroxiredoxin activity"/>
    <property type="evidence" value="ECO:0007669"/>
    <property type="project" value="UniProtKB-EC"/>
</dbReference>
<dbReference type="GO" id="GO:0008379">
    <property type="term" value="F:thioredoxin peroxidase activity"/>
    <property type="evidence" value="ECO:0007669"/>
    <property type="project" value="TreeGrafter"/>
</dbReference>
<dbReference type="GO" id="GO:0045454">
    <property type="term" value="P:cell redox homeostasis"/>
    <property type="evidence" value="ECO:0007669"/>
    <property type="project" value="TreeGrafter"/>
</dbReference>
<dbReference type="GO" id="GO:0033554">
    <property type="term" value="P:cellular response to stress"/>
    <property type="evidence" value="ECO:0007669"/>
    <property type="project" value="TreeGrafter"/>
</dbReference>
<dbReference type="GO" id="GO:0042744">
    <property type="term" value="P:hydrogen peroxide catabolic process"/>
    <property type="evidence" value="ECO:0007669"/>
    <property type="project" value="TreeGrafter"/>
</dbReference>
<dbReference type="GO" id="GO:0006979">
    <property type="term" value="P:response to oxidative stress"/>
    <property type="evidence" value="ECO:0007669"/>
    <property type="project" value="TreeGrafter"/>
</dbReference>
<dbReference type="Gene3D" id="3.40.30.10">
    <property type="entry name" value="Glutaredoxin"/>
    <property type="match status" value="1"/>
</dbReference>
<dbReference type="InterPro" id="IPR000866">
    <property type="entry name" value="AhpC/TSA"/>
</dbReference>
<dbReference type="InterPro" id="IPR050217">
    <property type="entry name" value="Peroxiredoxin"/>
</dbReference>
<dbReference type="InterPro" id="IPR036249">
    <property type="entry name" value="Thioredoxin-like_sf"/>
</dbReference>
<dbReference type="InterPro" id="IPR013766">
    <property type="entry name" value="Thioredoxin_domain"/>
</dbReference>
<dbReference type="PANTHER" id="PTHR10681:SF121">
    <property type="entry name" value="ALKYL HYDROPEROXIDE REDUCTASE C"/>
    <property type="match status" value="1"/>
</dbReference>
<dbReference type="PANTHER" id="PTHR10681">
    <property type="entry name" value="THIOREDOXIN PEROXIDASE"/>
    <property type="match status" value="1"/>
</dbReference>
<dbReference type="Pfam" id="PF00578">
    <property type="entry name" value="AhpC-TSA"/>
    <property type="match status" value="1"/>
</dbReference>
<dbReference type="SUPFAM" id="SSF52833">
    <property type="entry name" value="Thioredoxin-like"/>
    <property type="match status" value="1"/>
</dbReference>
<dbReference type="PROSITE" id="PS51352">
    <property type="entry name" value="THIOREDOXIN_2"/>
    <property type="match status" value="1"/>
</dbReference>
<proteinExistence type="inferred from homology"/>
<sequence>MSLIGSEVKPFKADAFKAGKFVTVTDDTLKGKWSVVFFYPADFTFVCPTELEDLAENYAEFQRLGVEI</sequence>
<organism>
    <name type="scientific">Rhodospirillum rubrum</name>
    <dbReference type="NCBI Taxonomy" id="1085"/>
    <lineage>
        <taxon>Bacteria</taxon>
        <taxon>Pseudomonadati</taxon>
        <taxon>Pseudomonadota</taxon>
        <taxon>Alphaproteobacteria</taxon>
        <taxon>Rhodospirillales</taxon>
        <taxon>Rhodospirillaceae</taxon>
        <taxon>Rhodospirillum</taxon>
    </lineage>
</organism>
<feature type="chain" id="PRO_0000135118" description="Alkyl hydroperoxide reductase C">
    <location>
        <begin position="1"/>
        <end position="68" status="greater than"/>
    </location>
</feature>
<feature type="domain" description="Thioredoxin" evidence="3">
    <location>
        <begin position="2"/>
        <end position="68" status="greater than"/>
    </location>
</feature>
<feature type="active site" description="Cysteine sulfenic acid (-SOH) intermediate" evidence="1">
    <location>
        <position position="47"/>
    </location>
</feature>
<feature type="disulfide bond" description="Interchain (with C-166); in linked form" evidence="1">
    <location>
        <position position="47"/>
    </location>
</feature>
<feature type="non-terminal residue">
    <location>
        <position position="68"/>
    </location>
</feature>
<keyword id="KW-0049">Antioxidant</keyword>
<keyword id="KW-0963">Cytoplasm</keyword>
<keyword id="KW-1015">Disulfide bond</keyword>
<keyword id="KW-0560">Oxidoreductase</keyword>
<keyword id="KW-0575">Peroxidase</keyword>
<keyword id="KW-0676">Redox-active center</keyword>
<protein>
    <recommendedName>
        <fullName>Alkyl hydroperoxide reductase C</fullName>
        <ecNumber evidence="1">1.11.1.26</ecNumber>
    </recommendedName>
    <alternativeName>
        <fullName>Peroxiredoxin</fullName>
    </alternativeName>
    <alternativeName>
        <fullName>Thioredoxin peroxidase</fullName>
    </alternativeName>
</protein>